<reference key="1">
    <citation type="journal article" date="1996" name="DNA Res.">
        <title>A 718-kb DNA sequence of the Escherichia coli K-12 genome corresponding to the 12.7-28.0 min region on the linkage map.</title>
        <authorList>
            <person name="Oshima T."/>
            <person name="Aiba H."/>
            <person name="Baba T."/>
            <person name="Fujita K."/>
            <person name="Hayashi K."/>
            <person name="Honjo A."/>
            <person name="Ikemoto K."/>
            <person name="Inada T."/>
            <person name="Itoh T."/>
            <person name="Kajihara M."/>
            <person name="Kanai K."/>
            <person name="Kashimoto K."/>
            <person name="Kimura S."/>
            <person name="Kitagawa M."/>
            <person name="Makino K."/>
            <person name="Masuda S."/>
            <person name="Miki T."/>
            <person name="Mizobuchi K."/>
            <person name="Mori H."/>
            <person name="Motomura K."/>
            <person name="Nakamura Y."/>
            <person name="Nashimoto H."/>
            <person name="Nishio Y."/>
            <person name="Saito N."/>
            <person name="Sampei G."/>
            <person name="Seki Y."/>
            <person name="Tagami H."/>
            <person name="Takemoto K."/>
            <person name="Wada C."/>
            <person name="Yamamoto Y."/>
            <person name="Yano M."/>
            <person name="Horiuchi T."/>
        </authorList>
    </citation>
    <scope>NUCLEOTIDE SEQUENCE [LARGE SCALE GENOMIC DNA]</scope>
    <source>
        <strain>K12 / W3110 / ATCC 27325 / DSM 5911</strain>
    </source>
</reference>
<reference key="2">
    <citation type="journal article" date="1997" name="Science">
        <title>The complete genome sequence of Escherichia coli K-12.</title>
        <authorList>
            <person name="Blattner F.R."/>
            <person name="Plunkett G. III"/>
            <person name="Bloch C.A."/>
            <person name="Perna N.T."/>
            <person name="Burland V."/>
            <person name="Riley M."/>
            <person name="Collado-Vides J."/>
            <person name="Glasner J.D."/>
            <person name="Rode C.K."/>
            <person name="Mayhew G.F."/>
            <person name="Gregor J."/>
            <person name="Davis N.W."/>
            <person name="Kirkpatrick H.A."/>
            <person name="Goeden M.A."/>
            <person name="Rose D.J."/>
            <person name="Mau B."/>
            <person name="Shao Y."/>
        </authorList>
    </citation>
    <scope>NUCLEOTIDE SEQUENCE [LARGE SCALE GENOMIC DNA]</scope>
    <source>
        <strain>K12 / MG1655 / ATCC 47076</strain>
    </source>
</reference>
<reference key="3">
    <citation type="journal article" date="2006" name="Mol. Syst. Biol.">
        <title>Highly accurate genome sequences of Escherichia coli K-12 strains MG1655 and W3110.</title>
        <authorList>
            <person name="Hayashi K."/>
            <person name="Morooka N."/>
            <person name="Yamamoto Y."/>
            <person name="Fujita K."/>
            <person name="Isono K."/>
            <person name="Choi S."/>
            <person name="Ohtsubo E."/>
            <person name="Baba T."/>
            <person name="Wanner B.L."/>
            <person name="Mori H."/>
            <person name="Horiuchi T."/>
        </authorList>
    </citation>
    <scope>NUCLEOTIDE SEQUENCE [LARGE SCALE GENOMIC DNA]</scope>
    <source>
        <strain>K12 / W3110 / ATCC 27325 / DSM 5911</strain>
    </source>
</reference>
<reference key="4">
    <citation type="journal article" date="2005" name="Science">
        <title>Global topology analysis of the Escherichia coli inner membrane proteome.</title>
        <authorList>
            <person name="Daley D.O."/>
            <person name="Rapp M."/>
            <person name="Granseth E."/>
            <person name="Melen K."/>
            <person name="Drew D."/>
            <person name="von Heijne G."/>
        </authorList>
    </citation>
    <scope>TOPOLOGY [LARGE SCALE ANALYSIS]</scope>
    <source>
        <strain>K12 / MG1655 / ATCC 47076</strain>
    </source>
</reference>
<gene>
    <name type="primary">ybjO</name>
    <name type="ordered locus">b0858</name>
    <name type="ordered locus">JW0842</name>
</gene>
<comment type="subcellular location">
    <subcellularLocation>
        <location>Cell inner membrane</location>
        <topology>Multi-pass membrane protein</topology>
    </subcellularLocation>
</comment>
<proteinExistence type="evidence at protein level"/>
<feature type="chain" id="PRO_0000168747" description="Inner membrane protein YbjO">
    <location>
        <begin position="1"/>
        <end position="162"/>
    </location>
</feature>
<feature type="topological domain" description="Periplasmic" evidence="1">
    <location>
        <begin position="1"/>
        <end position="23"/>
    </location>
</feature>
<feature type="transmembrane region" description="Helical" evidence="1">
    <location>
        <begin position="24"/>
        <end position="44"/>
    </location>
</feature>
<feature type="topological domain" description="Cytoplasmic" evidence="1">
    <location>
        <begin position="45"/>
        <end position="66"/>
    </location>
</feature>
<feature type="transmembrane region" description="Helical" evidence="1">
    <location>
        <begin position="67"/>
        <end position="87"/>
    </location>
</feature>
<feature type="topological domain" description="Periplasmic" evidence="1">
    <location>
        <begin position="88"/>
        <end position="94"/>
    </location>
</feature>
<feature type="transmembrane region" description="Helical" evidence="1">
    <location>
        <begin position="95"/>
        <end position="115"/>
    </location>
</feature>
<feature type="topological domain" description="Cytoplasmic" evidence="1">
    <location>
        <begin position="116"/>
        <end position="162"/>
    </location>
</feature>
<name>YBJO_ECOLI</name>
<keyword id="KW-0997">Cell inner membrane</keyword>
<keyword id="KW-1003">Cell membrane</keyword>
<keyword id="KW-0472">Membrane</keyword>
<keyword id="KW-1185">Reference proteome</keyword>
<keyword id="KW-0812">Transmembrane</keyword>
<keyword id="KW-1133">Transmembrane helix</keyword>
<accession>P0AAZ0</accession>
<accession>P75816</accession>
<protein>
    <recommendedName>
        <fullName>Inner membrane protein YbjO</fullName>
    </recommendedName>
</protein>
<organism>
    <name type="scientific">Escherichia coli (strain K12)</name>
    <dbReference type="NCBI Taxonomy" id="83333"/>
    <lineage>
        <taxon>Bacteria</taxon>
        <taxon>Pseudomonadati</taxon>
        <taxon>Pseudomonadota</taxon>
        <taxon>Gammaproteobacteria</taxon>
        <taxon>Enterobacterales</taxon>
        <taxon>Enterobacteriaceae</taxon>
        <taxon>Escherichia</taxon>
    </lineage>
</organism>
<evidence type="ECO:0000255" key="1"/>
<dbReference type="EMBL" id="U00096">
    <property type="protein sequence ID" value="AAC73945.1"/>
    <property type="molecule type" value="Genomic_DNA"/>
</dbReference>
<dbReference type="EMBL" id="AP009048">
    <property type="protein sequence ID" value="BAA35569.1"/>
    <property type="molecule type" value="Genomic_DNA"/>
</dbReference>
<dbReference type="PIR" id="B64824">
    <property type="entry name" value="B64824"/>
</dbReference>
<dbReference type="RefSeq" id="NP_415379.1">
    <property type="nucleotide sequence ID" value="NC_000913.3"/>
</dbReference>
<dbReference type="RefSeq" id="WP_000389260.1">
    <property type="nucleotide sequence ID" value="NZ_STEB01000019.1"/>
</dbReference>
<dbReference type="BioGRID" id="4261280">
    <property type="interactions" value="11"/>
</dbReference>
<dbReference type="DIP" id="DIP-48193N"/>
<dbReference type="FunCoup" id="P0AAZ0">
    <property type="interactions" value="47"/>
</dbReference>
<dbReference type="IntAct" id="P0AAZ0">
    <property type="interactions" value="1"/>
</dbReference>
<dbReference type="STRING" id="511145.b0858"/>
<dbReference type="PaxDb" id="511145-b0858"/>
<dbReference type="EnsemblBacteria" id="AAC73945">
    <property type="protein sequence ID" value="AAC73945"/>
    <property type="gene ID" value="b0858"/>
</dbReference>
<dbReference type="GeneID" id="945488"/>
<dbReference type="KEGG" id="ecj:JW0842"/>
<dbReference type="KEGG" id="eco:b0858"/>
<dbReference type="KEGG" id="ecoc:C3026_05350"/>
<dbReference type="PATRIC" id="fig|1411691.4.peg.1419"/>
<dbReference type="EchoBASE" id="EB3448"/>
<dbReference type="eggNOG" id="ENOG5032W9M">
    <property type="taxonomic scope" value="Bacteria"/>
</dbReference>
<dbReference type="HOGENOM" id="CLU_142271_0_0_6"/>
<dbReference type="InParanoid" id="P0AAZ0"/>
<dbReference type="OMA" id="TGYLWAA"/>
<dbReference type="OrthoDB" id="6546659at2"/>
<dbReference type="PhylomeDB" id="P0AAZ0"/>
<dbReference type="BioCyc" id="EcoCyc:G6448-MONOMER"/>
<dbReference type="PRO" id="PR:P0AAZ0"/>
<dbReference type="Proteomes" id="UP000000625">
    <property type="component" value="Chromosome"/>
</dbReference>
<dbReference type="GO" id="GO:0005886">
    <property type="term" value="C:plasma membrane"/>
    <property type="evidence" value="ECO:0000314"/>
    <property type="project" value="EcoCyc"/>
</dbReference>
<dbReference type="InterPro" id="IPR019703">
    <property type="entry name" value="YbjO_DH-like"/>
</dbReference>
<dbReference type="Pfam" id="PF10767">
    <property type="entry name" value="YbjO_DH-like"/>
    <property type="match status" value="1"/>
</dbReference>
<sequence>MEDETLGFFKKTSSSHARLNVPALVQVAALAIIMIRGLDVLMIFNTLGVRGIGEFIHRSVQTWSLTLVFLSSLVLVFIEIWCAFSLVKGRRWARWLYLLTQITAASYLWAASLGYGYPELFSIPGESKREIFHSLMLQKLPDMLILMLLFVPSTSRRFFQLQ</sequence>